<reference key="1">
    <citation type="journal article" date="2005" name="Nat. Genet.">
        <title>The complete genome sequence of Francisella tularensis, the causative agent of tularemia.</title>
        <authorList>
            <person name="Larsson P."/>
            <person name="Oyston P.C.F."/>
            <person name="Chain P."/>
            <person name="Chu M.C."/>
            <person name="Duffield M."/>
            <person name="Fuxelius H.-H."/>
            <person name="Garcia E."/>
            <person name="Haelltorp G."/>
            <person name="Johansson D."/>
            <person name="Isherwood K.E."/>
            <person name="Karp P.D."/>
            <person name="Larsson E."/>
            <person name="Liu Y."/>
            <person name="Michell S."/>
            <person name="Prior J."/>
            <person name="Prior R."/>
            <person name="Malfatti S."/>
            <person name="Sjoestedt A."/>
            <person name="Svensson K."/>
            <person name="Thompson N."/>
            <person name="Vergez L."/>
            <person name="Wagg J.K."/>
            <person name="Wren B.W."/>
            <person name="Lindler L.E."/>
            <person name="Andersson S.G.E."/>
            <person name="Forsman M."/>
            <person name="Titball R.W."/>
        </authorList>
    </citation>
    <scope>NUCLEOTIDE SEQUENCE [LARGE SCALE GENOMIC DNA]</scope>
    <source>
        <strain>SCHU S4 / Schu 4</strain>
    </source>
</reference>
<name>FETP_FRATT</name>
<sequence length="87" mass="10397">MTKVFCKKYHQELDAIPFQPLPGELGKKIHNEISNKAWQAWLAHQTILINEYRLNLIEPKAKEFLKEEMHKFLFEGKEEKPEQFSEI</sequence>
<proteinExistence type="inferred from homology"/>
<feature type="chain" id="PRO_0000214482" description="Probable Fe(2+)-trafficking protein">
    <location>
        <begin position="1"/>
        <end position="87"/>
    </location>
</feature>
<evidence type="ECO:0000255" key="1">
    <source>
        <dbReference type="HAMAP-Rule" id="MF_00686"/>
    </source>
</evidence>
<evidence type="ECO:0000305" key="2"/>
<organism>
    <name type="scientific">Francisella tularensis subsp. tularensis (strain SCHU S4 / Schu 4)</name>
    <dbReference type="NCBI Taxonomy" id="177416"/>
    <lineage>
        <taxon>Bacteria</taxon>
        <taxon>Pseudomonadati</taxon>
        <taxon>Pseudomonadota</taxon>
        <taxon>Gammaproteobacteria</taxon>
        <taxon>Thiotrichales</taxon>
        <taxon>Francisellaceae</taxon>
        <taxon>Francisella</taxon>
    </lineage>
</organism>
<keyword id="KW-0408">Iron</keyword>
<keyword id="KW-1185">Reference proteome</keyword>
<gene>
    <name type="ordered locus">FTT_0456c</name>
</gene>
<dbReference type="EMBL" id="AJ749949">
    <property type="protein sequence ID" value="CAG45089.1"/>
    <property type="status" value="ALT_INIT"/>
    <property type="molecule type" value="Genomic_DNA"/>
</dbReference>
<dbReference type="RefSeq" id="WP_003026946.1">
    <property type="nucleotide sequence ID" value="NZ_CP010290.1"/>
</dbReference>
<dbReference type="RefSeq" id="YP_169494.1">
    <property type="nucleotide sequence ID" value="NC_006570.2"/>
</dbReference>
<dbReference type="SMR" id="Q5NHJ8"/>
<dbReference type="STRING" id="177416.FTT_0456c"/>
<dbReference type="DNASU" id="3191407"/>
<dbReference type="EnsemblBacteria" id="CAG45089">
    <property type="protein sequence ID" value="CAG45089"/>
    <property type="gene ID" value="FTT_0456c"/>
</dbReference>
<dbReference type="KEGG" id="ftu:FTT_0456c"/>
<dbReference type="eggNOG" id="COG2924">
    <property type="taxonomic scope" value="Bacteria"/>
</dbReference>
<dbReference type="OrthoDB" id="9804318at2"/>
<dbReference type="Proteomes" id="UP000001174">
    <property type="component" value="Chromosome"/>
</dbReference>
<dbReference type="GO" id="GO:0005829">
    <property type="term" value="C:cytosol"/>
    <property type="evidence" value="ECO:0007669"/>
    <property type="project" value="TreeGrafter"/>
</dbReference>
<dbReference type="GO" id="GO:0005506">
    <property type="term" value="F:iron ion binding"/>
    <property type="evidence" value="ECO:0007669"/>
    <property type="project" value="UniProtKB-UniRule"/>
</dbReference>
<dbReference type="GO" id="GO:0034599">
    <property type="term" value="P:cellular response to oxidative stress"/>
    <property type="evidence" value="ECO:0007669"/>
    <property type="project" value="TreeGrafter"/>
</dbReference>
<dbReference type="Gene3D" id="1.10.3880.10">
    <property type="entry name" value="Fe(II) trafficking protein YggX"/>
    <property type="match status" value="1"/>
</dbReference>
<dbReference type="HAMAP" id="MF_00686">
    <property type="entry name" value="Fe_traffic_YggX"/>
    <property type="match status" value="1"/>
</dbReference>
<dbReference type="InterPro" id="IPR007457">
    <property type="entry name" value="Fe_traffick_prot_YggX"/>
</dbReference>
<dbReference type="InterPro" id="IPR036766">
    <property type="entry name" value="Fe_traffick_prot_YggX_sf"/>
</dbReference>
<dbReference type="NCBIfam" id="NF003817">
    <property type="entry name" value="PRK05408.1"/>
    <property type="match status" value="1"/>
</dbReference>
<dbReference type="PANTHER" id="PTHR36965">
    <property type="entry name" value="FE(2+)-TRAFFICKING PROTEIN-RELATED"/>
    <property type="match status" value="1"/>
</dbReference>
<dbReference type="PANTHER" id="PTHR36965:SF1">
    <property type="entry name" value="FE(2+)-TRAFFICKING PROTEIN-RELATED"/>
    <property type="match status" value="1"/>
</dbReference>
<dbReference type="Pfam" id="PF04362">
    <property type="entry name" value="Iron_traffic"/>
    <property type="match status" value="1"/>
</dbReference>
<dbReference type="PIRSF" id="PIRSF029827">
    <property type="entry name" value="Fe_traffic_YggX"/>
    <property type="match status" value="1"/>
</dbReference>
<dbReference type="SUPFAM" id="SSF111148">
    <property type="entry name" value="YggX-like"/>
    <property type="match status" value="1"/>
</dbReference>
<protein>
    <recommendedName>
        <fullName evidence="1">Probable Fe(2+)-trafficking protein</fullName>
    </recommendedName>
</protein>
<accession>Q5NHJ8</accession>
<comment type="function">
    <text evidence="1">Could be a mediator in iron transactions between iron acquisition and iron-requiring processes, such as synthesis and/or repair of Fe-S clusters in biosynthetic enzymes.</text>
</comment>
<comment type="similarity">
    <text evidence="1">Belongs to the Fe(2+)-trafficking protein family.</text>
</comment>
<comment type="sequence caution" evidence="2">
    <conflict type="erroneous initiation">
        <sequence resource="EMBL-CDS" id="CAG45089"/>
    </conflict>
</comment>